<dbReference type="EMBL" id="AF380118">
    <property type="protein sequence ID" value="AAK56322.1"/>
    <property type="molecule type" value="mRNA"/>
</dbReference>
<dbReference type="RefSeq" id="NP_999142.1">
    <property type="nucleotide sequence ID" value="NM_213977.1"/>
</dbReference>
<dbReference type="FunCoup" id="Q95KL4">
    <property type="interactions" value="250"/>
</dbReference>
<dbReference type="STRING" id="9823.ENSSSCP00000045228"/>
<dbReference type="PaxDb" id="9823-ENSSSCP00000026215"/>
<dbReference type="PeptideAtlas" id="Q95KL4"/>
<dbReference type="Ensembl" id="ENSSSCT00105071687">
    <property type="protein sequence ID" value="ENSSSCP00105050710"/>
    <property type="gene ID" value="ENSSSCG00105037603"/>
</dbReference>
<dbReference type="Ensembl" id="ENSSSCT00110063726">
    <property type="protein sequence ID" value="ENSSSCP00110044566"/>
    <property type="gene ID" value="ENSSSCG00110033455"/>
</dbReference>
<dbReference type="Ensembl" id="ENSSSCT00115013543">
    <property type="protein sequence ID" value="ENSSSCP00115012799"/>
    <property type="gene ID" value="ENSSSCG00115007755"/>
</dbReference>
<dbReference type="Ensembl" id="ENSSSCT00130068035">
    <property type="protein sequence ID" value="ENSSSCP00130048796"/>
    <property type="gene ID" value="ENSSSCG00130034852"/>
</dbReference>
<dbReference type="GeneID" id="397032"/>
<dbReference type="CTD" id="6415"/>
<dbReference type="eggNOG" id="ENOG502S9W8">
    <property type="taxonomic scope" value="Eukaryota"/>
</dbReference>
<dbReference type="InParanoid" id="Q95KL4"/>
<dbReference type="OrthoDB" id="9684768at2759"/>
<dbReference type="Proteomes" id="UP000008227">
    <property type="component" value="Unplaced"/>
</dbReference>
<dbReference type="Proteomes" id="UP000314985">
    <property type="component" value="Unplaced"/>
</dbReference>
<dbReference type="Proteomes" id="UP000694570">
    <property type="component" value="Unplaced"/>
</dbReference>
<dbReference type="Proteomes" id="UP000694571">
    <property type="component" value="Unplaced"/>
</dbReference>
<dbReference type="Proteomes" id="UP000694720">
    <property type="component" value="Unplaced"/>
</dbReference>
<dbReference type="Proteomes" id="UP000694722">
    <property type="component" value="Unplaced"/>
</dbReference>
<dbReference type="Proteomes" id="UP000694723">
    <property type="component" value="Unplaced"/>
</dbReference>
<dbReference type="Proteomes" id="UP000694724">
    <property type="component" value="Unplaced"/>
</dbReference>
<dbReference type="Proteomes" id="UP000694725">
    <property type="component" value="Unplaced"/>
</dbReference>
<dbReference type="Proteomes" id="UP000694726">
    <property type="component" value="Unplaced"/>
</dbReference>
<dbReference type="Proteomes" id="UP000694727">
    <property type="component" value="Unplaced"/>
</dbReference>
<dbReference type="Proteomes" id="UP000694728">
    <property type="component" value="Unplaced"/>
</dbReference>
<dbReference type="GO" id="GO:0005829">
    <property type="term" value="C:cytosol"/>
    <property type="evidence" value="ECO:0000318"/>
    <property type="project" value="GO_Central"/>
</dbReference>
<dbReference type="GO" id="GO:0016209">
    <property type="term" value="F:antioxidant activity"/>
    <property type="evidence" value="ECO:0007669"/>
    <property type="project" value="UniProtKB-KW"/>
</dbReference>
<dbReference type="GO" id="GO:0010269">
    <property type="term" value="P:response to selenium ion"/>
    <property type="evidence" value="ECO:0000318"/>
    <property type="project" value="GO_Central"/>
</dbReference>
<dbReference type="FunFam" id="3.40.30.10:FF:000158">
    <property type="entry name" value="Selenoprotein W"/>
    <property type="match status" value="1"/>
</dbReference>
<dbReference type="Gene3D" id="3.40.30.10">
    <property type="entry name" value="Glutaredoxin"/>
    <property type="match status" value="1"/>
</dbReference>
<dbReference type="InterPro" id="IPR011893">
    <property type="entry name" value="Selenoprotein_Rdx-typ"/>
</dbReference>
<dbReference type="InterPro" id="IPR051441">
    <property type="entry name" value="SelW_related"/>
</dbReference>
<dbReference type="InterPro" id="IPR036249">
    <property type="entry name" value="Thioredoxin-like_sf"/>
</dbReference>
<dbReference type="NCBIfam" id="TIGR02174">
    <property type="entry name" value="CXXU_selWTH"/>
    <property type="match status" value="1"/>
</dbReference>
<dbReference type="PANTHER" id="PTHR15124">
    <property type="entry name" value="SELENOPROTEIN W"/>
    <property type="match status" value="1"/>
</dbReference>
<dbReference type="PANTHER" id="PTHR15124:SF16">
    <property type="entry name" value="SELENOPROTEIN W"/>
    <property type="match status" value="1"/>
</dbReference>
<dbReference type="Pfam" id="PF10262">
    <property type="entry name" value="Rdx"/>
    <property type="match status" value="1"/>
</dbReference>
<dbReference type="SUPFAM" id="SSF52833">
    <property type="entry name" value="Thioredoxin-like"/>
    <property type="match status" value="1"/>
</dbReference>
<reference key="1">
    <citation type="submission" date="2001-05" db="EMBL/GenBank/DDBJ databases">
        <title>Amino acid sequence of porcine selenoprotein W derived from analysis of a cDNA library prepared from porcine smooth muscle.</title>
        <authorList>
            <person name="Costa N.D."/>
            <person name="Vorachek W.R."/>
            <person name="Whanger P.D."/>
        </authorList>
    </citation>
    <scope>NUCLEOTIDE SEQUENCE [MRNA]</scope>
    <source>
        <tissue>Smooth muscle</tissue>
    </source>
</reference>
<evidence type="ECO:0000250" key="1"/>
<evidence type="ECO:0000250" key="2">
    <source>
        <dbReference type="UniProtKB" id="P63302"/>
    </source>
</evidence>
<evidence type="ECO:0000305" key="3"/>
<evidence type="ECO:0000312" key="4">
    <source>
        <dbReference type="EMBL" id="AAK56322.1"/>
    </source>
</evidence>
<feature type="chain" id="PRO_0000097681" description="Selenoprotein W">
    <location>
        <begin position="1"/>
        <end position="87"/>
    </location>
</feature>
<feature type="non-standard amino acid" description="Selenocysteine">
    <location>
        <position position="13"/>
    </location>
</feature>
<feature type="modified residue" description="S-glutathionyl cysteine" evidence="1">
    <location>
        <position position="37"/>
    </location>
</feature>
<feature type="cross-link" description="Cysteinyl-selenocysteine (Cys-Sec); redox-active" evidence="1">
    <location>
        <begin position="10"/>
        <end position="13"/>
    </location>
</feature>
<name>SELW_PIG</name>
<accession>Q95KL4</accession>
<keyword id="KW-0049">Antioxidant</keyword>
<keyword id="KW-0963">Cytoplasm</keyword>
<keyword id="KW-0318">Glutathionylation</keyword>
<keyword id="KW-0676">Redox-active center</keyword>
<keyword id="KW-1185">Reference proteome</keyword>
<keyword id="KW-0712">Selenocysteine</keyword>
<gene>
    <name evidence="2" type="primary">SELENOW</name>
    <name evidence="4" type="synonym">SEPW</name>
</gene>
<proteinExistence type="inferred from homology"/>
<protein>
    <recommendedName>
        <fullName evidence="4">Selenoprotein W</fullName>
        <shortName evidence="2">SelW</shortName>
    </recommendedName>
</protein>
<organism>
    <name type="scientific">Sus scrofa</name>
    <name type="common">Pig</name>
    <dbReference type="NCBI Taxonomy" id="9823"/>
    <lineage>
        <taxon>Eukaryota</taxon>
        <taxon>Metazoa</taxon>
        <taxon>Chordata</taxon>
        <taxon>Craniata</taxon>
        <taxon>Vertebrata</taxon>
        <taxon>Euteleostomi</taxon>
        <taxon>Mammalia</taxon>
        <taxon>Eutheria</taxon>
        <taxon>Laurasiatheria</taxon>
        <taxon>Artiodactyla</taxon>
        <taxon>Suina</taxon>
        <taxon>Suidae</taxon>
        <taxon>Sus</taxon>
    </lineage>
</organism>
<sequence length="87" mass="9345">MGVAVRVVYCGAUGYKSKYLQLKKKLEDEFPGRLDICGEGTPQVTGFFEVLVAGKLVHSKKGGDGYVDTESKFLKLVAAIKAALAQG</sequence>
<comment type="function">
    <text evidence="1">Plays a role as a glutathione (GSH)-dependent antioxidant. May be involved in a redox-related process. May play a role in the myopathies of selenium deficiency (By similarity).</text>
</comment>
<comment type="subunit">
    <text evidence="1">Interacts with DPYSL2, PRDX1, YWHAB, YWHAG, HSP70 and HSP90.</text>
</comment>
<comment type="subcellular location">
    <subcellularLocation>
        <location>Cytoplasm</location>
    </subcellularLocation>
</comment>
<comment type="similarity">
    <text evidence="3">Belongs to the SelWTH family. Selenoprotein W subfamily.</text>
</comment>